<sequence length="395" mass="43154">MATVDRWLLPDGIEEVLPPEAARIEIARRQVLDLFQSWGYELVVTPHIEYLESLLTGAGQDLDQRTFKVVDPQSGRLMGFRADFTPQVARIDAHTLRREGPSRLCYAGSVLHAQPRALSTSRSPIQLGAELYGDASPTSDVEVISLMLATLQLTDVPDVHMDLGHVGIYRGLARAANLSGDVEQQLFDALQRKAVDEVQTLTADLPKDLGNMLRALVELCGGREVLAEARVRLGRAPASVLAALDDLLAIADRLASRYPDLPLYFDLGELRGYHYHTGVVFAVFVPGEGQSIAQGGRYDDIGADFGRARPATGFSTDLKTLVTLGRAEVVLPAGGIWMPDSSDAALWQHVCQLRNEGQRVVQALPGQPLSAALEADCDRQLIQQDGRWQVLPLTH</sequence>
<keyword id="KW-0028">Amino-acid biosynthesis</keyword>
<keyword id="KW-0963">Cytoplasm</keyword>
<keyword id="KW-0368">Histidine biosynthesis</keyword>
<feature type="chain" id="PRO_1000016277" description="ATP phosphoribosyltransferase regulatory subunit">
    <location>
        <begin position="1"/>
        <end position="395"/>
    </location>
</feature>
<comment type="function">
    <text evidence="1">Required for the first step of histidine biosynthesis. May allow the feedback regulation of ATP phosphoribosyltransferase activity by histidine.</text>
</comment>
<comment type="pathway">
    <text evidence="1">Amino-acid biosynthesis; L-histidine biosynthesis; L-histidine from 5-phospho-alpha-D-ribose 1-diphosphate: step 1/9.</text>
</comment>
<comment type="subunit">
    <text evidence="1">Heteromultimer composed of HisG and HisZ subunits.</text>
</comment>
<comment type="subcellular location">
    <subcellularLocation>
        <location evidence="1">Cytoplasm</location>
    </subcellularLocation>
</comment>
<comment type="miscellaneous">
    <text>This function is generally fulfilled by the C-terminal part of HisG, which is missing in some bacteria such as this one.</text>
</comment>
<comment type="similarity">
    <text evidence="1">Belongs to the class-II aminoacyl-tRNA synthetase family. HisZ subfamily.</text>
</comment>
<accession>Q1I453</accession>
<proteinExistence type="inferred from homology"/>
<dbReference type="EMBL" id="CT573326">
    <property type="protein sequence ID" value="CAK17583.1"/>
    <property type="molecule type" value="Genomic_DNA"/>
</dbReference>
<dbReference type="RefSeq" id="WP_011535944.1">
    <property type="nucleotide sequence ID" value="NC_008027.1"/>
</dbReference>
<dbReference type="SMR" id="Q1I453"/>
<dbReference type="STRING" id="384676.PSEEN4939"/>
<dbReference type="GeneID" id="32807887"/>
<dbReference type="KEGG" id="pen:PSEEN4939"/>
<dbReference type="eggNOG" id="COG3705">
    <property type="taxonomic scope" value="Bacteria"/>
</dbReference>
<dbReference type="HOGENOM" id="CLU_025113_0_1_6"/>
<dbReference type="OrthoDB" id="9769617at2"/>
<dbReference type="UniPathway" id="UPA00031">
    <property type="reaction ID" value="UER00006"/>
</dbReference>
<dbReference type="Proteomes" id="UP000000658">
    <property type="component" value="Chromosome"/>
</dbReference>
<dbReference type="GO" id="GO:0005737">
    <property type="term" value="C:cytoplasm"/>
    <property type="evidence" value="ECO:0007669"/>
    <property type="project" value="UniProtKB-SubCell"/>
</dbReference>
<dbReference type="GO" id="GO:0000105">
    <property type="term" value="P:L-histidine biosynthetic process"/>
    <property type="evidence" value="ECO:0007669"/>
    <property type="project" value="UniProtKB-UniRule"/>
</dbReference>
<dbReference type="CDD" id="cd00773">
    <property type="entry name" value="HisRS-like_core"/>
    <property type="match status" value="1"/>
</dbReference>
<dbReference type="Gene3D" id="3.30.930.10">
    <property type="entry name" value="Bira Bifunctional Protein, Domain 2"/>
    <property type="match status" value="1"/>
</dbReference>
<dbReference type="HAMAP" id="MF_00125">
    <property type="entry name" value="HisZ"/>
    <property type="match status" value="1"/>
</dbReference>
<dbReference type="InterPro" id="IPR045864">
    <property type="entry name" value="aa-tRNA-synth_II/BPL/LPL"/>
</dbReference>
<dbReference type="InterPro" id="IPR041715">
    <property type="entry name" value="HisRS-like_core"/>
</dbReference>
<dbReference type="InterPro" id="IPR004516">
    <property type="entry name" value="HisRS/HisZ"/>
</dbReference>
<dbReference type="InterPro" id="IPR004517">
    <property type="entry name" value="HisZ"/>
</dbReference>
<dbReference type="NCBIfam" id="TIGR00443">
    <property type="entry name" value="hisZ_biosyn_reg"/>
    <property type="match status" value="1"/>
</dbReference>
<dbReference type="NCBIfam" id="NF008935">
    <property type="entry name" value="PRK12292.1-1"/>
    <property type="match status" value="1"/>
</dbReference>
<dbReference type="NCBIfam" id="NF008937">
    <property type="entry name" value="PRK12292.1-4"/>
    <property type="match status" value="1"/>
</dbReference>
<dbReference type="NCBIfam" id="NF009086">
    <property type="entry name" value="PRK12421.1"/>
    <property type="match status" value="1"/>
</dbReference>
<dbReference type="PANTHER" id="PTHR11476:SF7">
    <property type="entry name" value="HISTIDINE--TRNA LIGASE"/>
    <property type="match status" value="1"/>
</dbReference>
<dbReference type="PANTHER" id="PTHR11476">
    <property type="entry name" value="HISTIDYL-TRNA SYNTHETASE"/>
    <property type="match status" value="1"/>
</dbReference>
<dbReference type="Pfam" id="PF13393">
    <property type="entry name" value="tRNA-synt_His"/>
    <property type="match status" value="1"/>
</dbReference>
<dbReference type="PIRSF" id="PIRSF001549">
    <property type="entry name" value="His-tRNA_synth"/>
    <property type="match status" value="1"/>
</dbReference>
<dbReference type="SUPFAM" id="SSF55681">
    <property type="entry name" value="Class II aaRS and biotin synthetases"/>
    <property type="match status" value="1"/>
</dbReference>
<gene>
    <name evidence="1" type="primary">hisZ</name>
    <name type="ordered locus">PSEEN4939</name>
</gene>
<protein>
    <recommendedName>
        <fullName evidence="1">ATP phosphoribosyltransferase regulatory subunit</fullName>
    </recommendedName>
</protein>
<organism>
    <name type="scientific">Pseudomonas entomophila (strain L48)</name>
    <dbReference type="NCBI Taxonomy" id="384676"/>
    <lineage>
        <taxon>Bacteria</taxon>
        <taxon>Pseudomonadati</taxon>
        <taxon>Pseudomonadota</taxon>
        <taxon>Gammaproteobacteria</taxon>
        <taxon>Pseudomonadales</taxon>
        <taxon>Pseudomonadaceae</taxon>
        <taxon>Pseudomonas</taxon>
    </lineage>
</organism>
<evidence type="ECO:0000255" key="1">
    <source>
        <dbReference type="HAMAP-Rule" id="MF_00125"/>
    </source>
</evidence>
<reference key="1">
    <citation type="journal article" date="2006" name="Nat. Biotechnol.">
        <title>Complete genome sequence of the entomopathogenic and metabolically versatile soil bacterium Pseudomonas entomophila.</title>
        <authorList>
            <person name="Vodovar N."/>
            <person name="Vallenet D."/>
            <person name="Cruveiller S."/>
            <person name="Rouy Z."/>
            <person name="Barbe V."/>
            <person name="Acosta C."/>
            <person name="Cattolico L."/>
            <person name="Jubin C."/>
            <person name="Lajus A."/>
            <person name="Segurens B."/>
            <person name="Vacherie B."/>
            <person name="Wincker P."/>
            <person name="Weissenbach J."/>
            <person name="Lemaitre B."/>
            <person name="Medigue C."/>
            <person name="Boccard F."/>
        </authorList>
    </citation>
    <scope>NUCLEOTIDE SEQUENCE [LARGE SCALE GENOMIC DNA]</scope>
    <source>
        <strain>L48</strain>
    </source>
</reference>
<name>HISZ_PSEE4</name>